<keyword id="KW-0004">4Fe-4S</keyword>
<keyword id="KW-0408">Iron</keyword>
<keyword id="KW-0411">Iron-sulfur</keyword>
<keyword id="KW-0456">Lyase</keyword>
<keyword id="KW-0479">Metal-binding</keyword>
<keyword id="KW-0949">S-adenosyl-L-methionine</keyword>
<keyword id="KW-0784">Thiamine biosynthesis</keyword>
<keyword id="KW-0862">Zinc</keyword>
<feature type="chain" id="PRO_1000075438" description="Phosphomethylpyrimidine synthase">
    <location>
        <begin position="1"/>
        <end position="460"/>
    </location>
</feature>
<feature type="binding site" evidence="1">
    <location>
        <position position="80"/>
    </location>
    <ligand>
        <name>substrate</name>
    </ligand>
</feature>
<feature type="binding site" evidence="1">
    <location>
        <position position="109"/>
    </location>
    <ligand>
        <name>substrate</name>
    </ligand>
</feature>
<feature type="binding site" evidence="1">
    <location>
        <position position="139"/>
    </location>
    <ligand>
        <name>substrate</name>
    </ligand>
</feature>
<feature type="binding site" evidence="1">
    <location>
        <position position="175"/>
    </location>
    <ligand>
        <name>substrate</name>
    </ligand>
</feature>
<feature type="binding site" evidence="1">
    <location>
        <begin position="195"/>
        <end position="197"/>
    </location>
    <ligand>
        <name>substrate</name>
    </ligand>
</feature>
<feature type="binding site" evidence="1">
    <location>
        <begin position="236"/>
        <end position="239"/>
    </location>
    <ligand>
        <name>substrate</name>
    </ligand>
</feature>
<feature type="binding site" evidence="1">
    <location>
        <position position="275"/>
    </location>
    <ligand>
        <name>substrate</name>
    </ligand>
</feature>
<feature type="binding site" evidence="1">
    <location>
        <position position="279"/>
    </location>
    <ligand>
        <name>Zn(2+)</name>
        <dbReference type="ChEBI" id="CHEBI:29105"/>
    </ligand>
</feature>
<feature type="binding site" evidence="1">
    <location>
        <position position="302"/>
    </location>
    <ligand>
        <name>substrate</name>
    </ligand>
</feature>
<feature type="binding site" evidence="1">
    <location>
        <position position="343"/>
    </location>
    <ligand>
        <name>Zn(2+)</name>
        <dbReference type="ChEBI" id="CHEBI:29105"/>
    </ligand>
</feature>
<feature type="binding site" evidence="1">
    <location>
        <position position="423"/>
    </location>
    <ligand>
        <name>[4Fe-4S] cluster</name>
        <dbReference type="ChEBI" id="CHEBI:49883"/>
        <note>4Fe-4S-S-AdoMet</note>
    </ligand>
</feature>
<feature type="binding site" evidence="1">
    <location>
        <position position="426"/>
    </location>
    <ligand>
        <name>[4Fe-4S] cluster</name>
        <dbReference type="ChEBI" id="CHEBI:49883"/>
        <note>4Fe-4S-S-AdoMet</note>
    </ligand>
</feature>
<feature type="binding site" evidence="1">
    <location>
        <position position="431"/>
    </location>
    <ligand>
        <name>[4Fe-4S] cluster</name>
        <dbReference type="ChEBI" id="CHEBI:49883"/>
        <note>4Fe-4S-S-AdoMet</note>
    </ligand>
</feature>
<protein>
    <recommendedName>
        <fullName evidence="1">Phosphomethylpyrimidine synthase</fullName>
        <ecNumber evidence="1">4.1.99.17</ecNumber>
    </recommendedName>
    <alternativeName>
        <fullName evidence="1">Hydroxymethylpyrimidine phosphate synthase</fullName>
        <shortName evidence="1">HMP-P synthase</shortName>
        <shortName evidence="1">HMP-phosphate synthase</shortName>
        <shortName evidence="1">HMPP synthase</shortName>
    </alternativeName>
    <alternativeName>
        <fullName evidence="1">Thiamine biosynthesis protein ThiC</fullName>
    </alternativeName>
</protein>
<proteinExistence type="inferred from homology"/>
<comment type="function">
    <text evidence="1">Catalyzes the synthesis of the hydroxymethylpyrimidine phosphate (HMP-P) moiety of thiamine from aminoimidazole ribotide (AIR) in a radical S-adenosyl-L-methionine (SAM)-dependent reaction.</text>
</comment>
<comment type="catalytic activity">
    <reaction evidence="1">
        <text>5-amino-1-(5-phospho-beta-D-ribosyl)imidazole + S-adenosyl-L-methionine = 4-amino-2-methyl-5-(phosphooxymethyl)pyrimidine + CO + 5'-deoxyadenosine + formate + L-methionine + 3 H(+)</text>
        <dbReference type="Rhea" id="RHEA:24840"/>
        <dbReference type="ChEBI" id="CHEBI:15378"/>
        <dbReference type="ChEBI" id="CHEBI:15740"/>
        <dbReference type="ChEBI" id="CHEBI:17245"/>
        <dbReference type="ChEBI" id="CHEBI:17319"/>
        <dbReference type="ChEBI" id="CHEBI:57844"/>
        <dbReference type="ChEBI" id="CHEBI:58354"/>
        <dbReference type="ChEBI" id="CHEBI:59789"/>
        <dbReference type="ChEBI" id="CHEBI:137981"/>
        <dbReference type="EC" id="4.1.99.17"/>
    </reaction>
</comment>
<comment type="cofactor">
    <cofactor evidence="1">
        <name>[4Fe-4S] cluster</name>
        <dbReference type="ChEBI" id="CHEBI:49883"/>
    </cofactor>
    <text evidence="1">Binds 1 [4Fe-4S] cluster per subunit. The cluster is coordinated with 3 cysteines and an exchangeable S-adenosyl-L-methionine.</text>
</comment>
<comment type="pathway">
    <text evidence="1">Cofactor biosynthesis; thiamine diphosphate biosynthesis.</text>
</comment>
<comment type="similarity">
    <text evidence="1">Belongs to the ThiC family.</text>
</comment>
<sequence>MRQEWVAPRRGQANVSQMHYARQGIITEEMTYVAKRENLSPELIRSEIARGRLIIPANINHLNLEPMAIGIASKCKVNANIGASPNSSNINEELEKLHLAVKYGADTVMDLSTGGGNLDEIRTAIINASPVPIGTVPIYQAVESVHGNIEKLTPEDFLHIIEKHAGQGVDYMTIHAGILIEHLPLVKTRLTGIVSRGGGIIAKWMLHHHKQNPLYTHFDEIIEIFKRYDVSFSLGDSLRPGCTHDASDAAQLAELKTLGQLTRRAWEHDVQVMVEGPGHVPMDQIEFNVKKQMEECSEAPFYVLGPLVTDIAPGYDHITSAIGAALAGWYGTAMLCYVTPKEHLGLPNAEDVRNGLIAYKIAAHAADIARHRPGARDRDDELSIARYNFDWNRQFQLSLDPDRAKEYHDETLPADIYKTAEFCSMCGPKFCPMQTKVDADAITELEKFLASQNQDNLTPV</sequence>
<gene>
    <name evidence="1" type="primary">thiC</name>
    <name type="ordered locus">MAE_43400</name>
</gene>
<reference key="1">
    <citation type="journal article" date="2007" name="DNA Res.">
        <title>Complete genomic structure of the bloom-forming toxic cyanobacterium Microcystis aeruginosa NIES-843.</title>
        <authorList>
            <person name="Kaneko T."/>
            <person name="Nakajima N."/>
            <person name="Okamoto S."/>
            <person name="Suzuki I."/>
            <person name="Tanabe Y."/>
            <person name="Tamaoki M."/>
            <person name="Nakamura Y."/>
            <person name="Kasai F."/>
            <person name="Watanabe A."/>
            <person name="Kawashima K."/>
            <person name="Kishida Y."/>
            <person name="Ono A."/>
            <person name="Shimizu Y."/>
            <person name="Takahashi C."/>
            <person name="Minami C."/>
            <person name="Fujishiro T."/>
            <person name="Kohara M."/>
            <person name="Katoh M."/>
            <person name="Nakazaki N."/>
            <person name="Nakayama S."/>
            <person name="Yamada M."/>
            <person name="Tabata S."/>
            <person name="Watanabe M.M."/>
        </authorList>
    </citation>
    <scope>NUCLEOTIDE SEQUENCE [LARGE SCALE GENOMIC DNA]</scope>
    <source>
        <strain>NIES-843 / IAM M-247</strain>
    </source>
</reference>
<organism>
    <name type="scientific">Microcystis aeruginosa (strain NIES-843 / IAM M-2473)</name>
    <dbReference type="NCBI Taxonomy" id="449447"/>
    <lineage>
        <taxon>Bacteria</taxon>
        <taxon>Bacillati</taxon>
        <taxon>Cyanobacteriota</taxon>
        <taxon>Cyanophyceae</taxon>
        <taxon>Oscillatoriophycideae</taxon>
        <taxon>Chroococcales</taxon>
        <taxon>Microcystaceae</taxon>
        <taxon>Microcystis</taxon>
    </lineage>
</organism>
<accession>B0JSK4</accession>
<evidence type="ECO:0000255" key="1">
    <source>
        <dbReference type="HAMAP-Rule" id="MF_00089"/>
    </source>
</evidence>
<name>THIC_MICAN</name>
<dbReference type="EC" id="4.1.99.17" evidence="1"/>
<dbReference type="EMBL" id="AP009552">
    <property type="protein sequence ID" value="BAG04162.1"/>
    <property type="molecule type" value="Genomic_DNA"/>
</dbReference>
<dbReference type="RefSeq" id="WP_002751876.1">
    <property type="nucleotide sequence ID" value="NC_010296.1"/>
</dbReference>
<dbReference type="SMR" id="B0JSK4"/>
<dbReference type="STRING" id="449447.MAE_43400"/>
<dbReference type="PaxDb" id="449447-MAE_43400"/>
<dbReference type="EnsemblBacteria" id="BAG04162">
    <property type="protein sequence ID" value="BAG04162"/>
    <property type="gene ID" value="MAE_43400"/>
</dbReference>
<dbReference type="KEGG" id="mar:MAE_43400"/>
<dbReference type="eggNOG" id="COG0422">
    <property type="taxonomic scope" value="Bacteria"/>
</dbReference>
<dbReference type="HOGENOM" id="CLU_013181_2_1_3"/>
<dbReference type="BioCyc" id="MAER449447:MAE_RS18835-MONOMER"/>
<dbReference type="UniPathway" id="UPA00060"/>
<dbReference type="Proteomes" id="UP000001510">
    <property type="component" value="Chromosome"/>
</dbReference>
<dbReference type="GO" id="GO:0005829">
    <property type="term" value="C:cytosol"/>
    <property type="evidence" value="ECO:0007669"/>
    <property type="project" value="TreeGrafter"/>
</dbReference>
<dbReference type="GO" id="GO:0051539">
    <property type="term" value="F:4 iron, 4 sulfur cluster binding"/>
    <property type="evidence" value="ECO:0007669"/>
    <property type="project" value="UniProtKB-KW"/>
</dbReference>
<dbReference type="GO" id="GO:0016830">
    <property type="term" value="F:carbon-carbon lyase activity"/>
    <property type="evidence" value="ECO:0007669"/>
    <property type="project" value="InterPro"/>
</dbReference>
<dbReference type="GO" id="GO:0008270">
    <property type="term" value="F:zinc ion binding"/>
    <property type="evidence" value="ECO:0007669"/>
    <property type="project" value="UniProtKB-UniRule"/>
</dbReference>
<dbReference type="GO" id="GO:0009228">
    <property type="term" value="P:thiamine biosynthetic process"/>
    <property type="evidence" value="ECO:0007669"/>
    <property type="project" value="UniProtKB-KW"/>
</dbReference>
<dbReference type="GO" id="GO:0009229">
    <property type="term" value="P:thiamine diphosphate biosynthetic process"/>
    <property type="evidence" value="ECO:0007669"/>
    <property type="project" value="UniProtKB-UniRule"/>
</dbReference>
<dbReference type="FunFam" id="3.20.20.540:FF:000001">
    <property type="entry name" value="Phosphomethylpyrimidine synthase"/>
    <property type="match status" value="1"/>
</dbReference>
<dbReference type="Gene3D" id="6.10.250.620">
    <property type="match status" value="1"/>
</dbReference>
<dbReference type="Gene3D" id="3.20.20.540">
    <property type="entry name" value="Radical SAM ThiC family, central domain"/>
    <property type="match status" value="1"/>
</dbReference>
<dbReference type="HAMAP" id="MF_00089">
    <property type="entry name" value="ThiC"/>
    <property type="match status" value="1"/>
</dbReference>
<dbReference type="InterPro" id="IPR037509">
    <property type="entry name" value="ThiC"/>
</dbReference>
<dbReference type="InterPro" id="IPR038521">
    <property type="entry name" value="ThiC/Bza_core_dom"/>
</dbReference>
<dbReference type="InterPro" id="IPR002817">
    <property type="entry name" value="ThiC/BzaA/B"/>
</dbReference>
<dbReference type="NCBIfam" id="NF006763">
    <property type="entry name" value="PRK09284.1"/>
    <property type="match status" value="1"/>
</dbReference>
<dbReference type="NCBIfam" id="NF009895">
    <property type="entry name" value="PRK13352.1"/>
    <property type="match status" value="1"/>
</dbReference>
<dbReference type="NCBIfam" id="TIGR00190">
    <property type="entry name" value="thiC"/>
    <property type="match status" value="1"/>
</dbReference>
<dbReference type="PANTHER" id="PTHR30557:SF1">
    <property type="entry name" value="PHOSPHOMETHYLPYRIMIDINE SYNTHASE, CHLOROPLASTIC"/>
    <property type="match status" value="1"/>
</dbReference>
<dbReference type="PANTHER" id="PTHR30557">
    <property type="entry name" value="THIAMINE BIOSYNTHESIS PROTEIN THIC"/>
    <property type="match status" value="1"/>
</dbReference>
<dbReference type="Pfam" id="PF01964">
    <property type="entry name" value="ThiC_Rad_SAM"/>
    <property type="match status" value="1"/>
</dbReference>
<dbReference type="SFLD" id="SFLDF00407">
    <property type="entry name" value="phosphomethylpyrimidine_syntha"/>
    <property type="match status" value="1"/>
</dbReference>
<dbReference type="SFLD" id="SFLDG01114">
    <property type="entry name" value="phosphomethylpyrimidine_syntha"/>
    <property type="match status" value="1"/>
</dbReference>
<dbReference type="SFLD" id="SFLDS00113">
    <property type="entry name" value="Radical_SAM_Phosphomethylpyrim"/>
    <property type="match status" value="1"/>
</dbReference>